<feature type="chain" id="PRO_0000385733" description="GTPase Obg">
    <location>
        <begin position="1"/>
        <end position="388"/>
    </location>
</feature>
<feature type="domain" description="Obg" evidence="2">
    <location>
        <begin position="4"/>
        <end position="162"/>
    </location>
</feature>
<feature type="domain" description="OBG-type G" evidence="1">
    <location>
        <begin position="163"/>
        <end position="329"/>
    </location>
</feature>
<feature type="region of interest" description="Disordered" evidence="3">
    <location>
        <begin position="352"/>
        <end position="388"/>
    </location>
</feature>
<feature type="compositionally biased region" description="Acidic residues" evidence="3">
    <location>
        <begin position="356"/>
        <end position="388"/>
    </location>
</feature>
<feature type="binding site" evidence="1">
    <location>
        <begin position="169"/>
        <end position="176"/>
    </location>
    <ligand>
        <name>GTP</name>
        <dbReference type="ChEBI" id="CHEBI:37565"/>
    </ligand>
</feature>
<feature type="binding site" evidence="1">
    <location>
        <position position="176"/>
    </location>
    <ligand>
        <name>Mg(2+)</name>
        <dbReference type="ChEBI" id="CHEBI:18420"/>
    </ligand>
</feature>
<feature type="binding site" evidence="1">
    <location>
        <begin position="194"/>
        <end position="198"/>
    </location>
    <ligand>
        <name>GTP</name>
        <dbReference type="ChEBI" id="CHEBI:37565"/>
    </ligand>
</feature>
<feature type="binding site" evidence="1">
    <location>
        <position position="196"/>
    </location>
    <ligand>
        <name>Mg(2+)</name>
        <dbReference type="ChEBI" id="CHEBI:18420"/>
    </ligand>
</feature>
<feature type="binding site" evidence="1">
    <location>
        <begin position="216"/>
        <end position="219"/>
    </location>
    <ligand>
        <name>GTP</name>
        <dbReference type="ChEBI" id="CHEBI:37565"/>
    </ligand>
</feature>
<feature type="binding site" evidence="1">
    <location>
        <begin position="283"/>
        <end position="286"/>
    </location>
    <ligand>
        <name>GTP</name>
        <dbReference type="ChEBI" id="CHEBI:37565"/>
    </ligand>
</feature>
<feature type="binding site" evidence="1">
    <location>
        <begin position="310"/>
        <end position="312"/>
    </location>
    <ligand>
        <name>GTP</name>
        <dbReference type="ChEBI" id="CHEBI:37565"/>
    </ligand>
</feature>
<reference key="1">
    <citation type="journal article" date="2003" name="Science">
        <title>A genomic view of the human-Bacteroides thetaiotaomicron symbiosis.</title>
        <authorList>
            <person name="Xu J."/>
            <person name="Bjursell M.K."/>
            <person name="Himrod J."/>
            <person name="Deng S."/>
            <person name="Carmichael L.K."/>
            <person name="Chiang H.C."/>
            <person name="Hooper L.V."/>
            <person name="Gordon J.I."/>
        </authorList>
    </citation>
    <scope>NUCLEOTIDE SEQUENCE [LARGE SCALE GENOMIC DNA]</scope>
    <source>
        <strain>ATCC 29148 / DSM 2079 / JCM 5827 / CCUG 10774 / NCTC 10582 / VPI-5482 / E50</strain>
    </source>
</reference>
<dbReference type="EC" id="3.6.5.-" evidence="1"/>
<dbReference type="EMBL" id="AE015928">
    <property type="protein sequence ID" value="AAO79493.1"/>
    <property type="molecule type" value="Genomic_DNA"/>
</dbReference>
<dbReference type="RefSeq" id="NP_813299.1">
    <property type="nucleotide sequence ID" value="NC_004663.1"/>
</dbReference>
<dbReference type="RefSeq" id="WP_011109231.1">
    <property type="nucleotide sequence ID" value="NC_004663.1"/>
</dbReference>
<dbReference type="SMR" id="Q89ZI9"/>
<dbReference type="FunCoup" id="Q89ZI9">
    <property type="interactions" value="510"/>
</dbReference>
<dbReference type="STRING" id="226186.BT_4388"/>
<dbReference type="PaxDb" id="226186-BT_4388"/>
<dbReference type="EnsemblBacteria" id="AAO79493">
    <property type="protein sequence ID" value="AAO79493"/>
    <property type="gene ID" value="BT_4388"/>
</dbReference>
<dbReference type="GeneID" id="60925564"/>
<dbReference type="KEGG" id="bth:BT_4388"/>
<dbReference type="PATRIC" id="fig|226186.12.peg.4466"/>
<dbReference type="eggNOG" id="COG0536">
    <property type="taxonomic scope" value="Bacteria"/>
</dbReference>
<dbReference type="HOGENOM" id="CLU_011747_2_0_10"/>
<dbReference type="InParanoid" id="Q89ZI9"/>
<dbReference type="OrthoDB" id="9807318at2"/>
<dbReference type="Proteomes" id="UP000001414">
    <property type="component" value="Chromosome"/>
</dbReference>
<dbReference type="GO" id="GO:0005737">
    <property type="term" value="C:cytoplasm"/>
    <property type="evidence" value="ECO:0007669"/>
    <property type="project" value="UniProtKB-SubCell"/>
</dbReference>
<dbReference type="GO" id="GO:0005525">
    <property type="term" value="F:GTP binding"/>
    <property type="evidence" value="ECO:0000318"/>
    <property type="project" value="GO_Central"/>
</dbReference>
<dbReference type="GO" id="GO:0003924">
    <property type="term" value="F:GTPase activity"/>
    <property type="evidence" value="ECO:0000318"/>
    <property type="project" value="GO_Central"/>
</dbReference>
<dbReference type="GO" id="GO:0000287">
    <property type="term" value="F:magnesium ion binding"/>
    <property type="evidence" value="ECO:0007669"/>
    <property type="project" value="InterPro"/>
</dbReference>
<dbReference type="GO" id="GO:0042254">
    <property type="term" value="P:ribosome biogenesis"/>
    <property type="evidence" value="ECO:0007669"/>
    <property type="project" value="UniProtKB-UniRule"/>
</dbReference>
<dbReference type="CDD" id="cd01898">
    <property type="entry name" value="Obg"/>
    <property type="match status" value="1"/>
</dbReference>
<dbReference type="FunFam" id="2.70.210.12:FF:000001">
    <property type="entry name" value="GTPase Obg"/>
    <property type="match status" value="1"/>
</dbReference>
<dbReference type="Gene3D" id="2.70.210.12">
    <property type="entry name" value="GTP1/OBG domain"/>
    <property type="match status" value="1"/>
</dbReference>
<dbReference type="Gene3D" id="3.40.50.300">
    <property type="entry name" value="P-loop containing nucleotide triphosphate hydrolases"/>
    <property type="match status" value="1"/>
</dbReference>
<dbReference type="HAMAP" id="MF_01454">
    <property type="entry name" value="GTPase_Obg"/>
    <property type="match status" value="1"/>
</dbReference>
<dbReference type="InterPro" id="IPR031167">
    <property type="entry name" value="G_OBG"/>
</dbReference>
<dbReference type="InterPro" id="IPR006073">
    <property type="entry name" value="GTP-bd"/>
</dbReference>
<dbReference type="InterPro" id="IPR014100">
    <property type="entry name" value="GTP-bd_Obg/CgtA"/>
</dbReference>
<dbReference type="InterPro" id="IPR006074">
    <property type="entry name" value="GTP1-OBG_CS"/>
</dbReference>
<dbReference type="InterPro" id="IPR006169">
    <property type="entry name" value="GTP1_OBG_dom"/>
</dbReference>
<dbReference type="InterPro" id="IPR036726">
    <property type="entry name" value="GTP1_OBG_dom_sf"/>
</dbReference>
<dbReference type="InterPro" id="IPR045086">
    <property type="entry name" value="OBG_GTPase"/>
</dbReference>
<dbReference type="InterPro" id="IPR027417">
    <property type="entry name" value="P-loop_NTPase"/>
</dbReference>
<dbReference type="NCBIfam" id="TIGR02729">
    <property type="entry name" value="Obg_CgtA"/>
    <property type="match status" value="1"/>
</dbReference>
<dbReference type="NCBIfam" id="NF008955">
    <property type="entry name" value="PRK12297.1"/>
    <property type="match status" value="1"/>
</dbReference>
<dbReference type="NCBIfam" id="NF008956">
    <property type="entry name" value="PRK12299.1"/>
    <property type="match status" value="1"/>
</dbReference>
<dbReference type="PANTHER" id="PTHR11702">
    <property type="entry name" value="DEVELOPMENTALLY REGULATED GTP-BINDING PROTEIN-RELATED"/>
    <property type="match status" value="1"/>
</dbReference>
<dbReference type="PANTHER" id="PTHR11702:SF31">
    <property type="entry name" value="MITOCHONDRIAL RIBOSOME-ASSOCIATED GTPASE 2"/>
    <property type="match status" value="1"/>
</dbReference>
<dbReference type="Pfam" id="PF01018">
    <property type="entry name" value="GTP1_OBG"/>
    <property type="match status" value="1"/>
</dbReference>
<dbReference type="Pfam" id="PF01926">
    <property type="entry name" value="MMR_HSR1"/>
    <property type="match status" value="1"/>
</dbReference>
<dbReference type="PIRSF" id="PIRSF002401">
    <property type="entry name" value="GTP_bd_Obg/CgtA"/>
    <property type="match status" value="1"/>
</dbReference>
<dbReference type="PRINTS" id="PR00326">
    <property type="entry name" value="GTP1OBG"/>
</dbReference>
<dbReference type="SUPFAM" id="SSF82051">
    <property type="entry name" value="Obg GTP-binding protein N-terminal domain"/>
    <property type="match status" value="1"/>
</dbReference>
<dbReference type="SUPFAM" id="SSF52540">
    <property type="entry name" value="P-loop containing nucleoside triphosphate hydrolases"/>
    <property type="match status" value="1"/>
</dbReference>
<dbReference type="PROSITE" id="PS51710">
    <property type="entry name" value="G_OBG"/>
    <property type="match status" value="1"/>
</dbReference>
<dbReference type="PROSITE" id="PS00905">
    <property type="entry name" value="GTP1_OBG"/>
    <property type="match status" value="1"/>
</dbReference>
<dbReference type="PROSITE" id="PS51883">
    <property type="entry name" value="OBG"/>
    <property type="match status" value="1"/>
</dbReference>
<accession>Q89ZI9</accession>
<keyword id="KW-0963">Cytoplasm</keyword>
<keyword id="KW-0342">GTP-binding</keyword>
<keyword id="KW-0378">Hydrolase</keyword>
<keyword id="KW-0460">Magnesium</keyword>
<keyword id="KW-0479">Metal-binding</keyword>
<keyword id="KW-0547">Nucleotide-binding</keyword>
<keyword id="KW-1185">Reference proteome</keyword>
<gene>
    <name evidence="1" type="primary">obg</name>
    <name type="ordered locus">BT_4388</name>
</gene>
<protein>
    <recommendedName>
        <fullName evidence="1">GTPase Obg</fullName>
        <ecNumber evidence="1">3.6.5.-</ecNumber>
    </recommendedName>
    <alternativeName>
        <fullName evidence="1">GTP-binding protein Obg</fullName>
    </alternativeName>
</protein>
<name>OBG_BACTN</name>
<sequence length="388" mass="43329">MAESNFVDYVKIYCRSGKGGRGSTHMRREKYCPNGGPDGGDGGRGGHIILRGNRNYWTLLHLKYDRHAMAGHGESGSKNRSFGKDGADKVIEVPCGTVVYNAETGEYLCDVTDDGQEVILLKGGRGGQGNSHFKTATRQAPRFAQPGEPMQEMTVIMELKLLADVGLVGFPNAGKSTLLSAISAAKPKIADYPFTTLEPNLGIVSYRDGKSFVMADIPGIIEGASQGKGLGLRFLRHIERNSLLLFMVPADSDDIRKEYEVLLNELRTFNPEMLDKQRVLAITKSDMLDQELMDEIEPTLPEGVPHIFISSVSGLGISVLKDILWEELNKESNKIEDIVHRPKDVTRLQQELKDMGEDEELDYEYEEDADDEDDDLDYEYEEEDWEEK</sequence>
<evidence type="ECO:0000255" key="1">
    <source>
        <dbReference type="HAMAP-Rule" id="MF_01454"/>
    </source>
</evidence>
<evidence type="ECO:0000255" key="2">
    <source>
        <dbReference type="PROSITE-ProRule" id="PRU01231"/>
    </source>
</evidence>
<evidence type="ECO:0000256" key="3">
    <source>
        <dbReference type="SAM" id="MobiDB-lite"/>
    </source>
</evidence>
<comment type="function">
    <text evidence="1">An essential GTPase which binds GTP, GDP and possibly (p)ppGpp with moderate affinity, with high nucleotide exchange rates and a fairly low GTP hydrolysis rate. Plays a role in control of the cell cycle, stress response, ribosome biogenesis and in those bacteria that undergo differentiation, in morphogenesis control.</text>
</comment>
<comment type="cofactor">
    <cofactor evidence="1">
        <name>Mg(2+)</name>
        <dbReference type="ChEBI" id="CHEBI:18420"/>
    </cofactor>
</comment>
<comment type="subunit">
    <text evidence="1">Monomer.</text>
</comment>
<comment type="subcellular location">
    <subcellularLocation>
        <location evidence="1">Cytoplasm</location>
    </subcellularLocation>
</comment>
<comment type="similarity">
    <text evidence="1">Belongs to the TRAFAC class OBG-HflX-like GTPase superfamily. OBG GTPase family.</text>
</comment>
<proteinExistence type="inferred from homology"/>
<organism>
    <name type="scientific">Bacteroides thetaiotaomicron (strain ATCC 29148 / DSM 2079 / JCM 5827 / CCUG 10774 / NCTC 10582 / VPI-5482 / E50)</name>
    <dbReference type="NCBI Taxonomy" id="226186"/>
    <lineage>
        <taxon>Bacteria</taxon>
        <taxon>Pseudomonadati</taxon>
        <taxon>Bacteroidota</taxon>
        <taxon>Bacteroidia</taxon>
        <taxon>Bacteroidales</taxon>
        <taxon>Bacteroidaceae</taxon>
        <taxon>Bacteroides</taxon>
    </lineage>
</organism>